<keyword id="KW-1185">Reference proteome</keyword>
<evidence type="ECO:0000255" key="1">
    <source>
        <dbReference type="HAMAP-Rule" id="MF_01567"/>
    </source>
</evidence>
<sequence length="494" mass="55199">MKKQAFSSEQYLNLQRDHILERINQFDGKLYLEFGGKMLEDFHAARVLPGYEPDNKIKLLQEFKDQVEVVIAINASNIEHSKARGDLGISYDQEVLRLIDKFNELNIYVGSVVITQYSGQPAADAFRNQLEKNGITSYIHYPIKGYPTDINHIISPEGMGKNDYIKTSRNLIVVTAPGPGSGKLATCLSNMYHDQINGIKSGYAKFETFPVWNLPLHHPVNLAYEAATADLDDVNMIDPFHLETYGKTTVNYNRDIEIFPVLKRMLERILGESPYASPTDMGVNMVGFAITDDEAAKEASKQEIIRRYYQTVLDFKNERVPETAVKKIELLMNDLGITPEDRQVVVAARAKAEETGGSALALELPNGQIVTGKNSELFGPTAAALINAIKTSAGIDKDTRLIEPEVVKPIQDLKIDHLGSRNPRLHSNEILIALAITAANNADAARAMKELSNLKGSEAHSTIILTDEDKNVLRKLGINVTFDPYYQYDKLYRK</sequence>
<protein>
    <recommendedName>
        <fullName evidence="1">UPF0371 protein stu1377</fullName>
    </recommendedName>
</protein>
<dbReference type="EMBL" id="CP000023">
    <property type="protein sequence ID" value="AAV60992.1"/>
    <property type="molecule type" value="Genomic_DNA"/>
</dbReference>
<dbReference type="RefSeq" id="WP_011226248.1">
    <property type="nucleotide sequence ID" value="NC_006448.1"/>
</dbReference>
<dbReference type="SMR" id="Q5M3M1"/>
<dbReference type="STRING" id="264199.stu1377"/>
<dbReference type="GeneID" id="66899142"/>
<dbReference type="KEGG" id="stl:stu1377"/>
<dbReference type="PATRIC" id="fig|264199.4.peg.1350"/>
<dbReference type="eggNOG" id="COG4868">
    <property type="taxonomic scope" value="Bacteria"/>
</dbReference>
<dbReference type="HOGENOM" id="CLU_046981_0_0_9"/>
<dbReference type="Proteomes" id="UP000001170">
    <property type="component" value="Chromosome"/>
</dbReference>
<dbReference type="Gene3D" id="1.20.1570.10">
    <property type="entry name" value="dip2346 domain like"/>
    <property type="match status" value="1"/>
</dbReference>
<dbReference type="Gene3D" id="3.10.630.10">
    <property type="entry name" value="dip2346 domain like"/>
    <property type="match status" value="1"/>
</dbReference>
<dbReference type="Gene3D" id="3.40.140.40">
    <property type="entry name" value="Domain of unknown function (DUF1846), C-terminal subdomain"/>
    <property type="match status" value="1"/>
</dbReference>
<dbReference type="HAMAP" id="MF_01567">
    <property type="entry name" value="UPF0371"/>
    <property type="match status" value="1"/>
</dbReference>
<dbReference type="InterPro" id="IPR014999">
    <property type="entry name" value="DUF1846"/>
</dbReference>
<dbReference type="InterPro" id="IPR048441">
    <property type="entry name" value="DUF1846_C"/>
</dbReference>
<dbReference type="InterPro" id="IPR048496">
    <property type="entry name" value="DUF1846_N"/>
</dbReference>
<dbReference type="NCBIfam" id="NF010184">
    <property type="entry name" value="PRK13663.1"/>
    <property type="match status" value="1"/>
</dbReference>
<dbReference type="Pfam" id="PF08903">
    <property type="entry name" value="DUF1846"/>
    <property type="match status" value="1"/>
</dbReference>
<dbReference type="Pfam" id="PF20921">
    <property type="entry name" value="DUF1846_C"/>
    <property type="match status" value="1"/>
</dbReference>
<dbReference type="PIRSF" id="PIRSF033132">
    <property type="entry name" value="DUF1846"/>
    <property type="match status" value="1"/>
</dbReference>
<organism>
    <name type="scientific">Streptococcus thermophilus (strain ATCC BAA-250 / LMG 18311)</name>
    <dbReference type="NCBI Taxonomy" id="264199"/>
    <lineage>
        <taxon>Bacteria</taxon>
        <taxon>Bacillati</taxon>
        <taxon>Bacillota</taxon>
        <taxon>Bacilli</taxon>
        <taxon>Lactobacillales</taxon>
        <taxon>Streptococcaceae</taxon>
        <taxon>Streptococcus</taxon>
    </lineage>
</organism>
<feature type="chain" id="PRO_0000245628" description="UPF0371 protein stu1377">
    <location>
        <begin position="1"/>
        <end position="494"/>
    </location>
</feature>
<comment type="similarity">
    <text evidence="1">Belongs to the UPF0371 family.</text>
</comment>
<reference key="1">
    <citation type="journal article" date="2004" name="Nat. Biotechnol.">
        <title>Complete sequence and comparative genome analysis of the dairy bacterium Streptococcus thermophilus.</title>
        <authorList>
            <person name="Bolotin A."/>
            <person name="Quinquis B."/>
            <person name="Renault P."/>
            <person name="Sorokin A."/>
            <person name="Ehrlich S.D."/>
            <person name="Kulakauskas S."/>
            <person name="Lapidus A."/>
            <person name="Goltsman E."/>
            <person name="Mazur M."/>
            <person name="Pusch G.D."/>
            <person name="Fonstein M."/>
            <person name="Overbeek R."/>
            <person name="Kyprides N."/>
            <person name="Purnelle B."/>
            <person name="Prozzi D."/>
            <person name="Ngui K."/>
            <person name="Masuy D."/>
            <person name="Hancy F."/>
            <person name="Burteau S."/>
            <person name="Boutry M."/>
            <person name="Delcour J."/>
            <person name="Goffeau A."/>
            <person name="Hols P."/>
        </authorList>
    </citation>
    <scope>NUCLEOTIDE SEQUENCE [LARGE SCALE GENOMIC DNA]</scope>
    <source>
        <strain>ATCC BAA-250 / LMG 18311</strain>
    </source>
</reference>
<proteinExistence type="inferred from homology"/>
<name>Y1377_STRT2</name>
<gene>
    <name type="ordered locus">stu1377</name>
</gene>
<accession>Q5M3M1</accession>